<organismHost>
    <name type="scientific">Mus musculus</name>
    <name type="common">Mouse</name>
    <dbReference type="NCBI Taxonomy" id="10090"/>
</organismHost>
<reference key="1">
    <citation type="journal article" date="1987" name="J. Virol.">
        <title>Sequence and structural organization of murine cytomegalovirus immediate-early gene 1.</title>
        <authorList>
            <person name="Keil G.M."/>
            <person name="Ebeling-Keil A."/>
            <person name="Koszinowski U.H."/>
        </authorList>
    </citation>
    <scope>NUCLEOTIDE SEQUENCE [GENOMIC DNA]</scope>
    <source>
        <strain>Isolate ATCC VR-1399</strain>
    </source>
</reference>
<reference key="2">
    <citation type="journal article" date="1996" name="J. Virol.">
        <title>Analysis of the complete DNA sequence of murine cytomegalovirus.</title>
        <authorList>
            <person name="Rawlinson W.D."/>
            <person name="Farrell H.E."/>
            <person name="Barrell B.G."/>
        </authorList>
    </citation>
    <scope>NUCLEOTIDE SEQUENCE [LARGE SCALE GENOMIC DNA]</scope>
</reference>
<feature type="chain" id="PRO_0000115357" description="Immediate-early protein 1">
    <location>
        <begin position="1"/>
        <end position="595"/>
    </location>
</feature>
<feature type="region of interest" description="Disordered" evidence="1">
    <location>
        <begin position="384"/>
        <end position="595"/>
    </location>
</feature>
<feature type="compositionally biased region" description="Low complexity" evidence="1">
    <location>
        <begin position="392"/>
        <end position="401"/>
    </location>
</feature>
<feature type="compositionally biased region" description="Acidic residues" evidence="1">
    <location>
        <begin position="402"/>
        <end position="416"/>
    </location>
</feature>
<feature type="compositionally biased region" description="Acidic residues" evidence="1">
    <location>
        <begin position="423"/>
        <end position="443"/>
    </location>
</feature>
<feature type="compositionally biased region" description="Acidic residues" evidence="1">
    <location>
        <begin position="454"/>
        <end position="467"/>
    </location>
</feature>
<feature type="compositionally biased region" description="Polar residues" evidence="1">
    <location>
        <begin position="469"/>
        <end position="484"/>
    </location>
</feature>
<feature type="compositionally biased region" description="Acidic residues" evidence="1">
    <location>
        <begin position="487"/>
        <end position="502"/>
    </location>
</feature>
<feature type="compositionally biased region" description="Low complexity" evidence="1">
    <location>
        <begin position="503"/>
        <end position="512"/>
    </location>
</feature>
<feature type="compositionally biased region" description="Acidic residues" evidence="1">
    <location>
        <begin position="521"/>
        <end position="532"/>
    </location>
</feature>
<feature type="compositionally biased region" description="Low complexity" evidence="1">
    <location>
        <begin position="550"/>
        <end position="567"/>
    </location>
</feature>
<accession>P11210</accession>
<proteinExistence type="predicted"/>
<name>VIE1_MUHVS</name>
<comment type="function">
    <text>The IE1 protein has some additive effect on the trans-activating properties of the IE3 protein.</text>
</comment>
<comment type="subcellular location">
    <subcellularLocation>
        <location evidence="2">Host nucleus</location>
    </subcellularLocation>
</comment>
<comment type="alternative products">
    <event type="alternative splicing"/>
    <isoform>
        <id>P11210-1</id>
        <name>IE1</name>
        <sequence type="displayed"/>
    </isoform>
    <isoform>
        <id>P11210-2</id>
        <name>IE3</name>
        <sequence type="not described"/>
    </isoform>
</comment>
<evidence type="ECO:0000256" key="1">
    <source>
        <dbReference type="SAM" id="MobiDB-lite"/>
    </source>
</evidence>
<evidence type="ECO:0000305" key="2"/>
<gene>
    <name type="primary">IE1</name>
</gene>
<keyword id="KW-0025">Alternative splicing</keyword>
<keyword id="KW-0244">Early protein</keyword>
<keyword id="KW-1048">Host nucleus</keyword>
<keyword id="KW-0597">Phosphoprotein</keyword>
<keyword id="KW-1185">Reference proteome</keyword>
<sequence length="595" mass="66709">MEPAAPSCNMIMIADQASVNAHGRHLDENRVYPSDKVPAHVANKILESGTETVRCDLTLEDMLGDYEYDDPTEEEKILMDRIADHVGNDNSDMAIKHAAVRSVLLSCKIAHLMIKQNYQSAINSATNILCQLANDIFERIERQRKMIYGCFRSEFDNVQLGRLMYDMYPHFMPTNLGPSEKRVWMSYVGEAIVAATNIDHALDERAAWAKTDCSLPGEFKPELCVLVGAIRRLHDPPCYTKPFLDAKSQLAVWQQMKAIESESVSTHVVVVEALKLRENLAKAVQETIAYERHQYHRVCQMMCNNMKDHLETTCMLARGRTLATLADLRSTRYNLALFLLSEMHIFDSFTMPRIRGAMKQARCMSYVERTISLAKFRELADRVHNRSAPSPQGVIEEQQQAGEEEQQQQQEIEYDPEMPPLEREEEQEDEQVEEEPPADEEEGGAVGGVTQEEPAGEATEEAEEDESQPGPSDNQVVPESSETPTPAEDEETQSADEGESQELEGSQQLILSRPAAPLTDSETDSDSEDDDEVTRIPVGFSLMTSPVLQPTTRSATAAASSGTAPRPALKRQYAMVHTRSKSSENQQQPKKKSKK</sequence>
<organism>
    <name type="scientific">Murid herpesvirus 1 (strain Smith)</name>
    <name type="common">MuHV-1</name>
    <name type="synonym">Mouse cytomegalovirus</name>
    <dbReference type="NCBI Taxonomy" id="10367"/>
    <lineage>
        <taxon>Viruses</taxon>
        <taxon>Duplodnaviria</taxon>
        <taxon>Heunggongvirae</taxon>
        <taxon>Peploviricota</taxon>
        <taxon>Herviviricetes</taxon>
        <taxon>Herpesvirales</taxon>
        <taxon>Orthoherpesviridae</taxon>
        <taxon>Betaherpesvirinae</taxon>
        <taxon>Muromegalovirus</taxon>
        <taxon>Muromegalovirus muridbeta1</taxon>
        <taxon>Murid herpesvirus 1</taxon>
    </lineage>
</organism>
<dbReference type="EMBL" id="M11788">
    <property type="protein sequence ID" value="AAA45981.1"/>
    <property type="molecule type" value="Genomic_DNA"/>
</dbReference>
<dbReference type="EMBL" id="U68299">
    <property type="status" value="NOT_ANNOTATED_CDS"/>
    <property type="molecule type" value="Genomic_DNA"/>
</dbReference>
<dbReference type="PIR" id="A27823">
    <property type="entry name" value="EDBEMC"/>
</dbReference>
<dbReference type="SMR" id="P11210"/>
<dbReference type="Proteomes" id="UP000008774">
    <property type="component" value="Segment"/>
</dbReference>
<dbReference type="GO" id="GO:0042025">
    <property type="term" value="C:host cell nucleus"/>
    <property type="evidence" value="ECO:0007669"/>
    <property type="project" value="UniProtKB-SubCell"/>
</dbReference>
<protein>
    <recommendedName>
        <fullName>Immediate-early protein 1</fullName>
        <shortName>IE1</shortName>
    </recommendedName>
    <alternativeName>
        <fullName>Immediate-early phosphoprotein PP89</fullName>
    </alternativeName>
</protein>